<evidence type="ECO:0000255" key="1">
    <source>
        <dbReference type="HAMAP-Rule" id="MF_02006"/>
    </source>
</evidence>
<proteinExistence type="inferred from homology"/>
<protein>
    <recommendedName>
        <fullName evidence="1">Tyrosine--tRNA ligase</fullName>
        <ecNumber evidence="1">6.1.1.1</ecNumber>
    </recommendedName>
    <alternativeName>
        <fullName evidence="1">Tyrosyl-tRNA synthetase</fullName>
        <shortName evidence="1">TyrRS</shortName>
    </alternativeName>
</protein>
<organism>
    <name type="scientific">Orientia tsutsugamushi (strain Boryong)</name>
    <name type="common">Rickettsia tsutsugamushi</name>
    <dbReference type="NCBI Taxonomy" id="357244"/>
    <lineage>
        <taxon>Bacteria</taxon>
        <taxon>Pseudomonadati</taxon>
        <taxon>Pseudomonadota</taxon>
        <taxon>Alphaproteobacteria</taxon>
        <taxon>Rickettsiales</taxon>
        <taxon>Rickettsiaceae</taxon>
        <taxon>Rickettsieae</taxon>
        <taxon>Orientia</taxon>
    </lineage>
</organism>
<name>SYY_ORITB</name>
<sequence>MHFINEFINRGYFYQSTDLTRLTQISNSSQIVAYIGFDCTAQSLHVGNLMQIMILRLLQQCGHKSIVVIGGATTKIGDPSEKDKLRRIITNDEIQQNISGIKRSLQKFIKFDETKNDVLLLNNQEWLDSINYINFLRDYGRAFSVNKMLTMNSVKSRLERHTPLSFLEFNYMLLQAYDFYYLNKYYNCNLQIGGSDQWGNITMGVDLVKKLSNNEVFGLTTPLMTNSSGEKMGKTVNGAVWLNEDMCSPYNYFQYWGNIEDNDVIRFAKLYGEFSEIELSKLTELLFNNVNEAKKQIAYKITLLCHGRDEANKALNTAIQMFEHKKADENLPTFTIKDCNNLKVGIPITELLVTIGLAKTKSEGKRLIQGNGIRINNIKVNNINLVVQLQDFIGQVITVSLGKKCHILVKIAK</sequence>
<reference key="1">
    <citation type="journal article" date="2007" name="Proc. Natl. Acad. Sci. U.S.A.">
        <title>The Orientia tsutsugamushi genome reveals massive proliferation of conjugative type IV secretion system and host-cell interaction genes.</title>
        <authorList>
            <person name="Cho N.-H."/>
            <person name="Kim H.-R."/>
            <person name="Lee J.-H."/>
            <person name="Kim S.-Y."/>
            <person name="Kim J."/>
            <person name="Cha S."/>
            <person name="Kim S.-Y."/>
            <person name="Darby A.C."/>
            <person name="Fuxelius H.-H."/>
            <person name="Yin J."/>
            <person name="Kim J.H."/>
            <person name="Kim J."/>
            <person name="Lee S.J."/>
            <person name="Koh Y.-S."/>
            <person name="Jang W.-J."/>
            <person name="Park K.-H."/>
            <person name="Andersson S.G.E."/>
            <person name="Choi M.-S."/>
            <person name="Kim I.-S."/>
        </authorList>
    </citation>
    <scope>NUCLEOTIDE SEQUENCE [LARGE SCALE GENOMIC DNA]</scope>
    <source>
        <strain>Boryong</strain>
    </source>
</reference>
<dbReference type="EC" id="6.1.1.1" evidence="1"/>
<dbReference type="EMBL" id="AM494475">
    <property type="protein sequence ID" value="CAM79245.1"/>
    <property type="molecule type" value="Genomic_DNA"/>
</dbReference>
<dbReference type="RefSeq" id="WP_011944314.1">
    <property type="nucleotide sequence ID" value="NC_009488.1"/>
</dbReference>
<dbReference type="SMR" id="A5CC73"/>
<dbReference type="KEGG" id="ots:OTBS_0179"/>
<dbReference type="eggNOG" id="COG0162">
    <property type="taxonomic scope" value="Bacteria"/>
</dbReference>
<dbReference type="HOGENOM" id="CLU_024003_0_3_5"/>
<dbReference type="Proteomes" id="UP000001565">
    <property type="component" value="Chromosome"/>
</dbReference>
<dbReference type="GO" id="GO:0005829">
    <property type="term" value="C:cytosol"/>
    <property type="evidence" value="ECO:0007669"/>
    <property type="project" value="TreeGrafter"/>
</dbReference>
<dbReference type="GO" id="GO:0005524">
    <property type="term" value="F:ATP binding"/>
    <property type="evidence" value="ECO:0007669"/>
    <property type="project" value="UniProtKB-UniRule"/>
</dbReference>
<dbReference type="GO" id="GO:0003723">
    <property type="term" value="F:RNA binding"/>
    <property type="evidence" value="ECO:0007669"/>
    <property type="project" value="UniProtKB-KW"/>
</dbReference>
<dbReference type="GO" id="GO:0004831">
    <property type="term" value="F:tyrosine-tRNA ligase activity"/>
    <property type="evidence" value="ECO:0007669"/>
    <property type="project" value="UniProtKB-UniRule"/>
</dbReference>
<dbReference type="GO" id="GO:0006437">
    <property type="term" value="P:tyrosyl-tRNA aminoacylation"/>
    <property type="evidence" value="ECO:0007669"/>
    <property type="project" value="UniProtKB-UniRule"/>
</dbReference>
<dbReference type="CDD" id="cd00805">
    <property type="entry name" value="TyrRS_core"/>
    <property type="match status" value="1"/>
</dbReference>
<dbReference type="Gene3D" id="3.40.50.620">
    <property type="entry name" value="HUPs"/>
    <property type="match status" value="1"/>
</dbReference>
<dbReference type="Gene3D" id="3.10.290.10">
    <property type="entry name" value="RNA-binding S4 domain"/>
    <property type="match status" value="1"/>
</dbReference>
<dbReference type="Gene3D" id="1.10.240.10">
    <property type="entry name" value="Tyrosyl-Transfer RNA Synthetase"/>
    <property type="match status" value="1"/>
</dbReference>
<dbReference type="HAMAP" id="MF_02006">
    <property type="entry name" value="Tyr_tRNA_synth_type1"/>
    <property type="match status" value="1"/>
</dbReference>
<dbReference type="InterPro" id="IPR002305">
    <property type="entry name" value="aa-tRNA-synth_Ic"/>
</dbReference>
<dbReference type="InterPro" id="IPR014729">
    <property type="entry name" value="Rossmann-like_a/b/a_fold"/>
</dbReference>
<dbReference type="InterPro" id="IPR036986">
    <property type="entry name" value="S4_RNA-bd_sf"/>
</dbReference>
<dbReference type="InterPro" id="IPR054608">
    <property type="entry name" value="SYY-like_C"/>
</dbReference>
<dbReference type="InterPro" id="IPR002307">
    <property type="entry name" value="Tyr-tRNA-ligase"/>
</dbReference>
<dbReference type="InterPro" id="IPR024088">
    <property type="entry name" value="Tyr-tRNA-ligase_bac-type"/>
</dbReference>
<dbReference type="InterPro" id="IPR024107">
    <property type="entry name" value="Tyr-tRNA-ligase_bac_1"/>
</dbReference>
<dbReference type="NCBIfam" id="TIGR00234">
    <property type="entry name" value="tyrS"/>
    <property type="match status" value="1"/>
</dbReference>
<dbReference type="PANTHER" id="PTHR11766:SF0">
    <property type="entry name" value="TYROSINE--TRNA LIGASE, MITOCHONDRIAL"/>
    <property type="match status" value="1"/>
</dbReference>
<dbReference type="PANTHER" id="PTHR11766">
    <property type="entry name" value="TYROSYL-TRNA SYNTHETASE"/>
    <property type="match status" value="1"/>
</dbReference>
<dbReference type="Pfam" id="PF22421">
    <property type="entry name" value="SYY_C-terminal"/>
    <property type="match status" value="1"/>
</dbReference>
<dbReference type="Pfam" id="PF00579">
    <property type="entry name" value="tRNA-synt_1b"/>
    <property type="match status" value="1"/>
</dbReference>
<dbReference type="PRINTS" id="PR01040">
    <property type="entry name" value="TRNASYNTHTYR"/>
</dbReference>
<dbReference type="SUPFAM" id="SSF55174">
    <property type="entry name" value="Alpha-L RNA-binding motif"/>
    <property type="match status" value="1"/>
</dbReference>
<dbReference type="SUPFAM" id="SSF52374">
    <property type="entry name" value="Nucleotidylyl transferase"/>
    <property type="match status" value="1"/>
</dbReference>
<dbReference type="PROSITE" id="PS50889">
    <property type="entry name" value="S4"/>
    <property type="match status" value="1"/>
</dbReference>
<gene>
    <name evidence="1" type="primary">tyrS</name>
    <name type="ordered locus">OTBS_0179</name>
</gene>
<comment type="function">
    <text evidence="1">Catalyzes the attachment of tyrosine to tRNA(Tyr) in a two-step reaction: tyrosine is first activated by ATP to form Tyr-AMP and then transferred to the acceptor end of tRNA(Tyr).</text>
</comment>
<comment type="catalytic activity">
    <reaction evidence="1">
        <text>tRNA(Tyr) + L-tyrosine + ATP = L-tyrosyl-tRNA(Tyr) + AMP + diphosphate + H(+)</text>
        <dbReference type="Rhea" id="RHEA:10220"/>
        <dbReference type="Rhea" id="RHEA-COMP:9706"/>
        <dbReference type="Rhea" id="RHEA-COMP:9707"/>
        <dbReference type="ChEBI" id="CHEBI:15378"/>
        <dbReference type="ChEBI" id="CHEBI:30616"/>
        <dbReference type="ChEBI" id="CHEBI:33019"/>
        <dbReference type="ChEBI" id="CHEBI:58315"/>
        <dbReference type="ChEBI" id="CHEBI:78442"/>
        <dbReference type="ChEBI" id="CHEBI:78536"/>
        <dbReference type="ChEBI" id="CHEBI:456215"/>
        <dbReference type="EC" id="6.1.1.1"/>
    </reaction>
</comment>
<comment type="subunit">
    <text evidence="1">Homodimer.</text>
</comment>
<comment type="subcellular location">
    <subcellularLocation>
        <location evidence="1">Cytoplasm</location>
    </subcellularLocation>
</comment>
<comment type="similarity">
    <text evidence="1">Belongs to the class-I aminoacyl-tRNA synthetase family. TyrS type 1 subfamily.</text>
</comment>
<feature type="chain" id="PRO_1000088606" description="Tyrosine--tRNA ligase">
    <location>
        <begin position="1"/>
        <end position="413"/>
    </location>
</feature>
<feature type="domain" description="S4 RNA-binding" evidence="1">
    <location>
        <begin position="346"/>
        <end position="411"/>
    </location>
</feature>
<feature type="short sequence motif" description="'HIGH' region">
    <location>
        <begin position="39"/>
        <end position="48"/>
    </location>
</feature>
<feature type="short sequence motif" description="'KMSKS' region">
    <location>
        <begin position="231"/>
        <end position="235"/>
    </location>
</feature>
<feature type="binding site" evidence="1">
    <location>
        <position position="34"/>
    </location>
    <ligand>
        <name>L-tyrosine</name>
        <dbReference type="ChEBI" id="CHEBI:58315"/>
    </ligand>
</feature>
<feature type="binding site" evidence="1">
    <location>
        <position position="171"/>
    </location>
    <ligand>
        <name>L-tyrosine</name>
        <dbReference type="ChEBI" id="CHEBI:58315"/>
    </ligand>
</feature>
<feature type="binding site" evidence="1">
    <location>
        <position position="175"/>
    </location>
    <ligand>
        <name>L-tyrosine</name>
        <dbReference type="ChEBI" id="CHEBI:58315"/>
    </ligand>
</feature>
<feature type="binding site" evidence="1">
    <location>
        <position position="234"/>
    </location>
    <ligand>
        <name>ATP</name>
        <dbReference type="ChEBI" id="CHEBI:30616"/>
    </ligand>
</feature>
<keyword id="KW-0030">Aminoacyl-tRNA synthetase</keyword>
<keyword id="KW-0067">ATP-binding</keyword>
<keyword id="KW-0963">Cytoplasm</keyword>
<keyword id="KW-0436">Ligase</keyword>
<keyword id="KW-0547">Nucleotide-binding</keyword>
<keyword id="KW-0648">Protein biosynthesis</keyword>
<keyword id="KW-1185">Reference proteome</keyword>
<keyword id="KW-0694">RNA-binding</keyword>
<accession>A5CC73</accession>